<evidence type="ECO:0000255" key="1">
    <source>
        <dbReference type="HAMAP-Rule" id="MF_01311"/>
    </source>
</evidence>
<evidence type="ECO:0000305" key="2"/>
<dbReference type="EMBL" id="AE006468">
    <property type="protein sequence ID" value="AAL22068.1"/>
    <property type="molecule type" value="Genomic_DNA"/>
</dbReference>
<dbReference type="RefSeq" id="NP_462109.1">
    <property type="nucleotide sequence ID" value="NC_003197.2"/>
</dbReference>
<dbReference type="RefSeq" id="WP_000345576.1">
    <property type="nucleotide sequence ID" value="NC_003197.2"/>
</dbReference>
<dbReference type="STRING" id="99287.STM3194"/>
<dbReference type="PaxDb" id="99287-STM3194"/>
<dbReference type="GeneID" id="1254717"/>
<dbReference type="KEGG" id="stm:STM3194"/>
<dbReference type="PATRIC" id="fig|99287.12.peg.3388"/>
<dbReference type="HOGENOM" id="CLU_090583_1_0_6"/>
<dbReference type="OMA" id="CGYDNPI"/>
<dbReference type="PhylomeDB" id="P0A1H1"/>
<dbReference type="BioCyc" id="SENT99287:STM3194-MONOMER"/>
<dbReference type="Proteomes" id="UP000001014">
    <property type="component" value="Chromosome"/>
</dbReference>
<dbReference type="GO" id="GO:0005886">
    <property type="term" value="C:plasma membrane"/>
    <property type="evidence" value="ECO:0007669"/>
    <property type="project" value="UniProtKB-SubCell"/>
</dbReference>
<dbReference type="GO" id="GO:0015035">
    <property type="term" value="F:protein-disulfide reductase activity"/>
    <property type="evidence" value="ECO:0000318"/>
    <property type="project" value="GO_Central"/>
</dbReference>
<dbReference type="GO" id="GO:0006457">
    <property type="term" value="P:protein folding"/>
    <property type="evidence" value="ECO:0000318"/>
    <property type="project" value="GO_Central"/>
</dbReference>
<dbReference type="Gene3D" id="1.20.1550.10">
    <property type="entry name" value="DsbB-like"/>
    <property type="match status" value="1"/>
</dbReference>
<dbReference type="HAMAP" id="MF_01311">
    <property type="entry name" value="DsbI"/>
    <property type="match status" value="1"/>
</dbReference>
<dbReference type="InterPro" id="IPR003752">
    <property type="entry name" value="DiS_bond_form_DsbB/BdbC"/>
</dbReference>
<dbReference type="InterPro" id="IPR023792">
    <property type="entry name" value="DiS_OxRdtase_Dsbl"/>
</dbReference>
<dbReference type="InterPro" id="IPR050183">
    <property type="entry name" value="DsbB"/>
</dbReference>
<dbReference type="InterPro" id="IPR023380">
    <property type="entry name" value="DsbB-like_sf"/>
</dbReference>
<dbReference type="NCBIfam" id="NF003304">
    <property type="entry name" value="PRK04307.1"/>
    <property type="match status" value="1"/>
</dbReference>
<dbReference type="PANTHER" id="PTHR36570">
    <property type="entry name" value="DISULFIDE BOND FORMATION PROTEIN B"/>
    <property type="match status" value="1"/>
</dbReference>
<dbReference type="PANTHER" id="PTHR36570:SF1">
    <property type="entry name" value="PROTEIN-DISULFIDE OXIDOREDUCTASE DSBI"/>
    <property type="match status" value="1"/>
</dbReference>
<dbReference type="Pfam" id="PF02600">
    <property type="entry name" value="DsbB"/>
    <property type="match status" value="1"/>
</dbReference>
<dbReference type="SUPFAM" id="SSF158442">
    <property type="entry name" value="DsbB-like"/>
    <property type="match status" value="1"/>
</dbReference>
<protein>
    <recommendedName>
        <fullName evidence="1">Protein-disulfide oxidoreductase DsbI</fullName>
    </recommendedName>
</protein>
<name>DSBI_SALTY</name>
<sequence>MDFIKGLWRDLRARPVDTLVRWQEQRFLWLLMAIAMGGLIILAHSFFQIYLYMAPCEQCVYIRYAMFVMVIGGVIAAINPKNIVLKLIGCIAAFYGSIMGIKFSIKLNGIHHAVHNADPDSLFGVQGCSTDPTFPFNLPLAEWAPEWFKPTGDCGYDAPIVPDGVTLSSVQQWFVDLYQQSEGWYLLPPWHFMNMAQACMLAFGLCLILLLVMSGAWALKLARGK</sequence>
<proteinExistence type="inferred from homology"/>
<gene>
    <name evidence="1" type="primary">dsbI</name>
    <name type="ordered locus">STM3194</name>
</gene>
<accession>P0A1H1</accession>
<accession>Q8XEK0</accession>
<comment type="function">
    <text evidence="1">Required for disulfide bond formation in some proteins. Part of a redox system composed of DsbI and DsbL that mediates formation of an essential disulfide bond in AssT.</text>
</comment>
<comment type="subunit">
    <text evidence="1">Interacts with DsbL.</text>
</comment>
<comment type="subcellular location">
    <subcellularLocation>
        <location evidence="1">Cell inner membrane</location>
        <topology evidence="1">Multi-pass membrane protein</topology>
    </subcellularLocation>
</comment>
<comment type="similarity">
    <text evidence="1">Belongs to the DsbB family. DsbI subfamily.</text>
</comment>
<comment type="caution">
    <text evidence="2">Was originally given the gene name dsbB; however another gene encoding a dsbB more closely related to that of the characterized E.coli protein bears this gene name (DSBB_SALTY, AC Q8XG65).</text>
</comment>
<organism>
    <name type="scientific">Salmonella typhimurium (strain LT2 / SGSC1412 / ATCC 700720)</name>
    <dbReference type="NCBI Taxonomy" id="99287"/>
    <lineage>
        <taxon>Bacteria</taxon>
        <taxon>Pseudomonadati</taxon>
        <taxon>Pseudomonadota</taxon>
        <taxon>Gammaproteobacteria</taxon>
        <taxon>Enterobacterales</taxon>
        <taxon>Enterobacteriaceae</taxon>
        <taxon>Salmonella</taxon>
    </lineage>
</organism>
<reference key="1">
    <citation type="journal article" date="2001" name="Nature">
        <title>Complete genome sequence of Salmonella enterica serovar Typhimurium LT2.</title>
        <authorList>
            <person name="McClelland M."/>
            <person name="Sanderson K.E."/>
            <person name="Spieth J."/>
            <person name="Clifton S.W."/>
            <person name="Latreille P."/>
            <person name="Courtney L."/>
            <person name="Porwollik S."/>
            <person name="Ali J."/>
            <person name="Dante M."/>
            <person name="Du F."/>
            <person name="Hou S."/>
            <person name="Layman D."/>
            <person name="Leonard S."/>
            <person name="Nguyen C."/>
            <person name="Scott K."/>
            <person name="Holmes A."/>
            <person name="Grewal N."/>
            <person name="Mulvaney E."/>
            <person name="Ryan E."/>
            <person name="Sun H."/>
            <person name="Florea L."/>
            <person name="Miller W."/>
            <person name="Stoneking T."/>
            <person name="Nhan M."/>
            <person name="Waterston R."/>
            <person name="Wilson R.K."/>
        </authorList>
    </citation>
    <scope>NUCLEOTIDE SEQUENCE [LARGE SCALE GENOMIC DNA]</scope>
    <source>
        <strain>LT2 / SGSC1412 / ATCC 700720</strain>
    </source>
</reference>
<feature type="chain" id="PRO_0000059391" description="Protein-disulfide oxidoreductase DsbI">
    <location>
        <begin position="1"/>
        <end position="225"/>
    </location>
</feature>
<feature type="transmembrane region" description="Helical" evidence="1">
    <location>
        <begin position="27"/>
        <end position="47"/>
    </location>
</feature>
<feature type="transmembrane region" description="Helical" evidence="1">
    <location>
        <begin position="65"/>
        <end position="85"/>
    </location>
</feature>
<feature type="transmembrane region" description="Helical" evidence="1">
    <location>
        <begin position="87"/>
        <end position="107"/>
    </location>
</feature>
<feature type="transmembrane region" description="Helical" evidence="1">
    <location>
        <begin position="199"/>
        <end position="219"/>
    </location>
</feature>
<feature type="disulfide bond" description="Redox-active" evidence="1">
    <location>
        <begin position="56"/>
        <end position="59"/>
    </location>
</feature>
<feature type="disulfide bond" description="Redox-active" evidence="1">
    <location>
        <begin position="128"/>
        <end position="154"/>
    </location>
</feature>
<keyword id="KW-0997">Cell inner membrane</keyword>
<keyword id="KW-1003">Cell membrane</keyword>
<keyword id="KW-1015">Disulfide bond</keyword>
<keyword id="KW-0249">Electron transport</keyword>
<keyword id="KW-0472">Membrane</keyword>
<keyword id="KW-0560">Oxidoreductase</keyword>
<keyword id="KW-0676">Redox-active center</keyword>
<keyword id="KW-1185">Reference proteome</keyword>
<keyword id="KW-0812">Transmembrane</keyword>
<keyword id="KW-1133">Transmembrane helix</keyword>
<keyword id="KW-0813">Transport</keyword>